<organism>
    <name type="scientific">Francisella tularensis subsp. tularensis (strain SCHU S4 / Schu 4)</name>
    <dbReference type="NCBI Taxonomy" id="177416"/>
    <lineage>
        <taxon>Bacteria</taxon>
        <taxon>Pseudomonadati</taxon>
        <taxon>Pseudomonadota</taxon>
        <taxon>Gammaproteobacteria</taxon>
        <taxon>Thiotrichales</taxon>
        <taxon>Francisellaceae</taxon>
        <taxon>Francisella</taxon>
    </lineage>
</organism>
<feature type="chain" id="PRO_0000305450" description="Pantothenate synthetase">
    <location>
        <begin position="1"/>
        <end position="261"/>
    </location>
</feature>
<feature type="active site" description="Proton donor" evidence="1">
    <location>
        <position position="36"/>
    </location>
</feature>
<feature type="binding site" evidence="1">
    <location>
        <begin position="29"/>
        <end position="36"/>
    </location>
    <ligand>
        <name>ATP</name>
        <dbReference type="ChEBI" id="CHEBI:30616"/>
    </ligand>
</feature>
<feature type="binding site" evidence="1">
    <location>
        <position position="60"/>
    </location>
    <ligand>
        <name>(R)-pantoate</name>
        <dbReference type="ChEBI" id="CHEBI:15980"/>
    </ligand>
</feature>
<feature type="binding site" evidence="1">
    <location>
        <position position="60"/>
    </location>
    <ligand>
        <name>beta-alanine</name>
        <dbReference type="ChEBI" id="CHEBI:57966"/>
    </ligand>
</feature>
<feature type="binding site" evidence="1">
    <location>
        <begin position="147"/>
        <end position="150"/>
    </location>
    <ligand>
        <name>ATP</name>
        <dbReference type="ChEBI" id="CHEBI:30616"/>
    </ligand>
</feature>
<feature type="binding site" evidence="1">
    <location>
        <position position="153"/>
    </location>
    <ligand>
        <name>(R)-pantoate</name>
        <dbReference type="ChEBI" id="CHEBI:15980"/>
    </ligand>
</feature>
<feature type="binding site" evidence="1">
    <location>
        <begin position="184"/>
        <end position="187"/>
    </location>
    <ligand>
        <name>ATP</name>
        <dbReference type="ChEBI" id="CHEBI:30616"/>
    </ligand>
</feature>
<feature type="strand" evidence="2">
    <location>
        <begin position="2"/>
        <end position="4"/>
    </location>
</feature>
<feature type="helix" evidence="2">
    <location>
        <begin position="7"/>
        <end position="15"/>
    </location>
</feature>
<feature type="strand" evidence="2">
    <location>
        <begin position="23"/>
        <end position="28"/>
    </location>
</feature>
<feature type="helix" evidence="2">
    <location>
        <begin position="34"/>
        <end position="46"/>
    </location>
</feature>
<feature type="strand" evidence="2">
    <location>
        <begin position="48"/>
        <end position="54"/>
    </location>
</feature>
<feature type="helix" evidence="2">
    <location>
        <begin position="58"/>
        <end position="60"/>
    </location>
</feature>
<feature type="helix" evidence="2">
    <location>
        <begin position="64"/>
        <end position="69"/>
    </location>
</feature>
<feature type="helix" evidence="2">
    <location>
        <begin position="74"/>
        <end position="83"/>
    </location>
</feature>
<feature type="strand" evidence="2">
    <location>
        <begin position="87"/>
        <end position="90"/>
    </location>
</feature>
<feature type="helix" evidence="2">
    <location>
        <begin position="94"/>
        <end position="97"/>
    </location>
</feature>
<feature type="strand" evidence="2">
    <location>
        <begin position="104"/>
        <end position="108"/>
    </location>
</feature>
<feature type="helix" evidence="2">
    <location>
        <begin position="111"/>
        <end position="114"/>
    </location>
</feature>
<feature type="helix" evidence="2">
    <location>
        <begin position="117"/>
        <end position="120"/>
    </location>
</feature>
<feature type="helix" evidence="2">
    <location>
        <begin position="124"/>
        <end position="139"/>
    </location>
</feature>
<feature type="strand" evidence="2">
    <location>
        <begin position="142"/>
        <end position="147"/>
    </location>
</feature>
<feature type="helix" evidence="2">
    <location>
        <begin position="151"/>
        <end position="163"/>
    </location>
</feature>
<feature type="strand" evidence="2">
    <location>
        <begin position="169"/>
        <end position="173"/>
    </location>
</feature>
<feature type="helix" evidence="2">
    <location>
        <begin position="186"/>
        <end position="190"/>
    </location>
</feature>
<feature type="helix" evidence="2">
    <location>
        <begin position="193"/>
        <end position="207"/>
    </location>
</feature>
<feature type="helix" evidence="2">
    <location>
        <begin position="214"/>
        <end position="222"/>
    </location>
</feature>
<feature type="turn" evidence="2">
    <location>
        <begin position="223"/>
        <end position="225"/>
    </location>
</feature>
<feature type="strand" evidence="2">
    <location>
        <begin position="227"/>
        <end position="234"/>
    </location>
</feature>
<feature type="strand" evidence="2">
    <location>
        <begin position="237"/>
        <end position="244"/>
    </location>
</feature>
<feature type="strand" evidence="2">
    <location>
        <begin position="247"/>
        <end position="254"/>
    </location>
</feature>
<feature type="turn" evidence="2">
    <location>
        <begin position="255"/>
        <end position="257"/>
    </location>
</feature>
<keyword id="KW-0002">3D-structure</keyword>
<keyword id="KW-0067">ATP-binding</keyword>
<keyword id="KW-0963">Cytoplasm</keyword>
<keyword id="KW-0436">Ligase</keyword>
<keyword id="KW-0547">Nucleotide-binding</keyword>
<keyword id="KW-0566">Pantothenate biosynthesis</keyword>
<keyword id="KW-1185">Reference proteome</keyword>
<dbReference type="EC" id="6.3.2.1" evidence="1"/>
<dbReference type="EMBL" id="AJ749949">
    <property type="protein sequence ID" value="CAG46023.1"/>
    <property type="molecule type" value="Genomic_DNA"/>
</dbReference>
<dbReference type="RefSeq" id="WP_003022190.1">
    <property type="nucleotide sequence ID" value="NZ_CP010290.1"/>
</dbReference>
<dbReference type="RefSeq" id="YP_170335.1">
    <property type="nucleotide sequence ID" value="NC_006570.2"/>
</dbReference>
<dbReference type="PDB" id="3N8H">
    <property type="method" value="X-ray"/>
    <property type="resolution" value="2.00 A"/>
    <property type="chains" value="A/B=1-261"/>
</dbReference>
<dbReference type="PDB" id="3QTT">
    <property type="method" value="X-ray"/>
    <property type="resolution" value="2.60 A"/>
    <property type="chains" value="A/B=1-258"/>
</dbReference>
<dbReference type="PDB" id="5HG0">
    <property type="method" value="X-ray"/>
    <property type="resolution" value="2.40 A"/>
    <property type="chains" value="A/B=1-261"/>
</dbReference>
<dbReference type="PDBsum" id="3N8H"/>
<dbReference type="PDBsum" id="3QTT"/>
<dbReference type="PDBsum" id="5HG0"/>
<dbReference type="SMR" id="Q5NF57"/>
<dbReference type="STRING" id="177416.FTT_1390"/>
<dbReference type="DNASU" id="3191378"/>
<dbReference type="EnsemblBacteria" id="CAG46023">
    <property type="protein sequence ID" value="CAG46023"/>
    <property type="gene ID" value="FTT_1390"/>
</dbReference>
<dbReference type="KEGG" id="ftu:FTT_1390"/>
<dbReference type="eggNOG" id="COG0414">
    <property type="taxonomic scope" value="Bacteria"/>
</dbReference>
<dbReference type="OrthoDB" id="9773087at2"/>
<dbReference type="UniPathway" id="UPA00028">
    <property type="reaction ID" value="UER00005"/>
</dbReference>
<dbReference type="EvolutionaryTrace" id="Q5NF57"/>
<dbReference type="Proteomes" id="UP000001174">
    <property type="component" value="Chromosome"/>
</dbReference>
<dbReference type="GO" id="GO:0005829">
    <property type="term" value="C:cytosol"/>
    <property type="evidence" value="ECO:0007669"/>
    <property type="project" value="TreeGrafter"/>
</dbReference>
<dbReference type="GO" id="GO:0005524">
    <property type="term" value="F:ATP binding"/>
    <property type="evidence" value="ECO:0007669"/>
    <property type="project" value="UniProtKB-KW"/>
</dbReference>
<dbReference type="GO" id="GO:0004592">
    <property type="term" value="F:pantoate-beta-alanine ligase activity"/>
    <property type="evidence" value="ECO:0007669"/>
    <property type="project" value="UniProtKB-UniRule"/>
</dbReference>
<dbReference type="GO" id="GO:0015940">
    <property type="term" value="P:pantothenate biosynthetic process"/>
    <property type="evidence" value="ECO:0007669"/>
    <property type="project" value="UniProtKB-UniRule"/>
</dbReference>
<dbReference type="Gene3D" id="3.40.50.620">
    <property type="entry name" value="HUPs"/>
    <property type="match status" value="1"/>
</dbReference>
<dbReference type="Gene3D" id="3.30.1300.10">
    <property type="entry name" value="Pantoate-beta-alanine ligase, C-terminal domain"/>
    <property type="match status" value="1"/>
</dbReference>
<dbReference type="HAMAP" id="MF_00158">
    <property type="entry name" value="PanC"/>
    <property type="match status" value="1"/>
</dbReference>
<dbReference type="InterPro" id="IPR004821">
    <property type="entry name" value="Cyt_trans-like"/>
</dbReference>
<dbReference type="InterPro" id="IPR003721">
    <property type="entry name" value="Pantoate_ligase"/>
</dbReference>
<dbReference type="InterPro" id="IPR042176">
    <property type="entry name" value="Pantoate_ligase_C"/>
</dbReference>
<dbReference type="InterPro" id="IPR014729">
    <property type="entry name" value="Rossmann-like_a/b/a_fold"/>
</dbReference>
<dbReference type="NCBIfam" id="TIGR00125">
    <property type="entry name" value="cyt_tran_rel"/>
    <property type="match status" value="1"/>
</dbReference>
<dbReference type="NCBIfam" id="TIGR00018">
    <property type="entry name" value="panC"/>
    <property type="match status" value="1"/>
</dbReference>
<dbReference type="PANTHER" id="PTHR21299">
    <property type="entry name" value="CYTIDYLATE KINASE/PANTOATE-BETA-ALANINE LIGASE"/>
    <property type="match status" value="1"/>
</dbReference>
<dbReference type="PANTHER" id="PTHR21299:SF1">
    <property type="entry name" value="PANTOATE--BETA-ALANINE LIGASE"/>
    <property type="match status" value="1"/>
</dbReference>
<dbReference type="Pfam" id="PF02569">
    <property type="entry name" value="Pantoate_ligase"/>
    <property type="match status" value="1"/>
</dbReference>
<dbReference type="SUPFAM" id="SSF52374">
    <property type="entry name" value="Nucleotidylyl transferase"/>
    <property type="match status" value="1"/>
</dbReference>
<reference key="1">
    <citation type="journal article" date="2005" name="Nat. Genet.">
        <title>The complete genome sequence of Francisella tularensis, the causative agent of tularemia.</title>
        <authorList>
            <person name="Larsson P."/>
            <person name="Oyston P.C.F."/>
            <person name="Chain P."/>
            <person name="Chu M.C."/>
            <person name="Duffield M."/>
            <person name="Fuxelius H.-H."/>
            <person name="Garcia E."/>
            <person name="Haelltorp G."/>
            <person name="Johansson D."/>
            <person name="Isherwood K.E."/>
            <person name="Karp P.D."/>
            <person name="Larsson E."/>
            <person name="Liu Y."/>
            <person name="Michell S."/>
            <person name="Prior J."/>
            <person name="Prior R."/>
            <person name="Malfatti S."/>
            <person name="Sjoestedt A."/>
            <person name="Svensson K."/>
            <person name="Thompson N."/>
            <person name="Vergez L."/>
            <person name="Wagg J.K."/>
            <person name="Wren B.W."/>
            <person name="Lindler L.E."/>
            <person name="Andersson S.G.E."/>
            <person name="Forsman M."/>
            <person name="Titball R.W."/>
        </authorList>
    </citation>
    <scope>NUCLEOTIDE SEQUENCE [LARGE SCALE GENOMIC DNA]</scope>
    <source>
        <strain>SCHU S4 / Schu 4</strain>
    </source>
</reference>
<name>PANC_FRATT</name>
<evidence type="ECO:0000255" key="1">
    <source>
        <dbReference type="HAMAP-Rule" id="MF_00158"/>
    </source>
</evidence>
<evidence type="ECO:0007829" key="2">
    <source>
        <dbReference type="PDB" id="3N8H"/>
    </source>
</evidence>
<comment type="function">
    <text evidence="1">Catalyzes the condensation of pantoate with beta-alanine in an ATP-dependent reaction via a pantoyl-adenylate intermediate.</text>
</comment>
<comment type="catalytic activity">
    <reaction evidence="1">
        <text>(R)-pantoate + beta-alanine + ATP = (R)-pantothenate + AMP + diphosphate + H(+)</text>
        <dbReference type="Rhea" id="RHEA:10912"/>
        <dbReference type="ChEBI" id="CHEBI:15378"/>
        <dbReference type="ChEBI" id="CHEBI:15980"/>
        <dbReference type="ChEBI" id="CHEBI:29032"/>
        <dbReference type="ChEBI" id="CHEBI:30616"/>
        <dbReference type="ChEBI" id="CHEBI:33019"/>
        <dbReference type="ChEBI" id="CHEBI:57966"/>
        <dbReference type="ChEBI" id="CHEBI:456215"/>
        <dbReference type="EC" id="6.3.2.1"/>
    </reaction>
</comment>
<comment type="pathway">
    <text evidence="1">Cofactor biosynthesis; (R)-pantothenate biosynthesis; (R)-pantothenate from (R)-pantoate and beta-alanine: step 1/1.</text>
</comment>
<comment type="subunit">
    <text evidence="1">Homodimer.</text>
</comment>
<comment type="subcellular location">
    <subcellularLocation>
        <location evidence="1">Cytoplasm</location>
    </subcellularLocation>
</comment>
<comment type="miscellaneous">
    <text evidence="1">The reaction proceeds by a bi uni uni bi ping pong mechanism.</text>
</comment>
<comment type="similarity">
    <text evidence="1">Belongs to the pantothenate synthetase family.</text>
</comment>
<protein>
    <recommendedName>
        <fullName evidence="1">Pantothenate synthetase</fullName>
        <shortName evidence="1">PS</shortName>
        <ecNumber evidence="1">6.3.2.1</ecNumber>
    </recommendedName>
    <alternativeName>
        <fullName evidence="1">Pantoate--beta-alanine ligase</fullName>
    </alternativeName>
    <alternativeName>
        <fullName evidence="1">Pantoate-activating enzyme</fullName>
    </alternativeName>
</protein>
<accession>Q5NF57</accession>
<sequence length="261" mass="29715">MIIADNIKQFHSIRNSLIKQQKIGFVPTMGALHNGHISLIKKAKSENDVVIVSIFVNPTQFNNPNDYQTYPNQLQQDIQILASLDVDVLFNPSEKDIYPDGNLLRIEPKLEIANILEGKSRPGHFSGMLTVVLKLLQITKPNNLYLGEKDYQQVMLIKQLVKDFFINTKIIVCPTQRQPSGLPLSSRNKNLTSTDIEIANKIYEILRQDDFSNLEELTNKINSTGAKLQYIQKLNNRIFLAFYIGKVRLIDNFLKETGPSC</sequence>
<gene>
    <name evidence="1" type="primary">panC</name>
    <name type="ordered locus">FTT_1390</name>
</gene>
<proteinExistence type="evidence at protein level"/>